<comment type="function">
    <text evidence="6 7">Expressed in peripheral macrophages and intestinal myeloid-derived cells, is required for optimal PRR (pattern recognition receptor)-induced signaling, cytokine secretion, and bacterial clearance. Upon stimulation of a broad range of PRRs (pattern recognition receptor) such as NOD2 or TLR2, TLR3, TLR4, TLR5, TLR7 and TLR9, associates with YWHAQ/14-3-3T, which in turn leads to the recruitment and activation of MAP kinases and NF-kappa-B signaling complexes that amplifies PRR-induced downstream signals and cytokine secretion (PubMed:28436939). In the intestine, regulates adherens junction stability by regulating the degradation of CYTH1 and CYTH2, probably acting as substrate cofactor for SCF E3 ubiquitin-protein ligase complexes. Stabilizes adherens junctions by limiting CYTH1-dependent ARF6 activation (PubMed:29420262).</text>
</comment>
<comment type="subunit">
    <text evidence="6 7">Interacts with IRAK1, NOD2 and RIPK2; the interaction takes place upon PRR stimulation (PubMed:28436939). Interacts with YWHAQ/14-3-3T; the interaction increases upon PRR stimulation and is required for cellular signaling pathway activation and cytokine secretion (PubMed:28436939). Interacts (via N-terminal domain) with CYTH1 and CYTH2 (via their N-terminal domains) (PubMed:29420262). Interacts with FBXW11 and BTRC; associates with SCF E3 ubiquitin-protein ligase complexes (PubMed:29420262).</text>
</comment>
<comment type="interaction">
    <interactant intactId="EBI-7545562">
        <id>Q3KP66</id>
    </interactant>
    <interactant intactId="EBI-307461">
        <id>Q9Y297</id>
        <label>BTRC</label>
    </interactant>
    <organismsDiffer>false</organismsDiffer>
    <experiments>2</experiments>
</comment>
<comment type="interaction">
    <interactant intactId="EBI-7545562">
        <id>Q3KP66</id>
    </interactant>
    <interactant intactId="EBI-997830">
        <id>Q15438</id>
        <label>CYTH1</label>
    </interactant>
    <organismsDiffer>false</organismsDiffer>
    <experiments>8</experiments>
</comment>
<comment type="interaction">
    <interactant intactId="EBI-7545562">
        <id>Q3KP66</id>
    </interactant>
    <interactant intactId="EBI-448974">
        <id>Q99418</id>
        <label>CYTH2</label>
    </interactant>
    <organismsDiffer>false</organismsDiffer>
    <experiments>4</experiments>
</comment>
<comment type="interaction">
    <interactant intactId="EBI-7545562">
        <id>Q3KP66</id>
    </interactant>
    <interactant intactId="EBI-355189">
        <id>Q9UKB1</id>
        <label>FBXW11</label>
    </interactant>
    <organismsDiffer>false</organismsDiffer>
    <experiments>2</experiments>
</comment>
<comment type="interaction">
    <interactant intactId="EBI-52354453">
        <id>Q3KP66-1</id>
    </interactant>
    <interactant intactId="EBI-997830">
        <id>Q15438</id>
        <label>CYTH1</label>
    </interactant>
    <organismsDiffer>false</organismsDiffer>
    <experiments>4</experiments>
</comment>
<comment type="interaction">
    <interactant intactId="EBI-52354453">
        <id>Q3KP66-1</id>
    </interactant>
    <interactant intactId="EBI-448974">
        <id>Q99418</id>
        <label>CYTH2</label>
    </interactant>
    <organismsDiffer>false</organismsDiffer>
    <experiments>3</experiments>
</comment>
<comment type="subcellular location">
    <subcellularLocation>
        <location evidence="6">Nucleus</location>
    </subcellularLocation>
    <subcellularLocation>
        <location evidence="6">Cytoplasm</location>
    </subcellularLocation>
    <text evidence="6">Translocates to the nucleus upon NOD2 stimulation.</text>
</comment>
<comment type="alternative products">
    <event type="alternative splicing"/>
    <isoform>
        <id>Q3KP66-1</id>
        <name>1</name>
        <sequence type="displayed"/>
    </isoform>
    <isoform>
        <id>Q3KP66-3</id>
        <name>2</name>
        <sequence type="described" ref="VSP_046048"/>
    </isoform>
</comment>
<comment type="tissue specificity">
    <text evidence="6 7">Highly expressed in intestinal myeloid-derived cells and expressed in monocyte-derived macrophages upon induction by PRR activation.</text>
</comment>
<comment type="induction">
    <text evidence="6">Expression is induced by the component of peptidoglycan muramyl dipeptide (PubMed:28436939). Negatively regulated by microRNA-24 (miR-24) (PubMed:28436939).</text>
</comment>
<comment type="disease" evidence="5 6 7">
    <disease id="DI-05306">
        <name>Inflammatory bowel disease 29</name>
        <acronym>IBD29</acronym>
        <description>A chronic, relapsing inflammation of the gastrointestinal tract with a complex etiology. It is subdivided into Crohn disease and ulcerative colitis phenotypes. Crohn disease may affect any part of the gastrointestinal tract from the mouth to the anus, but most frequently it involves the terminal ileum and colon. Bowel inflammation is transmural and discontinuous; it may contain granulomas or be associated with intestinal or perianal fistulas. In contrast, in ulcerative colitis, the inflammation is continuous and limited to rectal and colonic mucosal layers; fistulas and granulomas are not observed. Both diseases include extraintestinal inflammation of the skin, eyes, or joints.</description>
        <dbReference type="MIM" id="618077"/>
    </disease>
    <text>Disease susceptibility is associated with variants affecting the gene represented in this entry.</text>
</comment>
<comment type="sequence caution" evidence="9">
    <conflict type="miscellaneous discrepancy">
        <sequence resource="EMBL-CDS" id="BAA91771"/>
    </conflict>
    <text>Unlikely isoform. Aberrant splice sites.</text>
</comment>
<dbReference type="EMBL" id="AK001583">
    <property type="protein sequence ID" value="BAA91771.1"/>
    <property type="status" value="ALT_SEQ"/>
    <property type="molecule type" value="mRNA"/>
</dbReference>
<dbReference type="EMBL" id="AK001763">
    <property type="protein sequence ID" value="BAA91892.1"/>
    <property type="molecule type" value="mRNA"/>
</dbReference>
<dbReference type="EMBL" id="AK303885">
    <property type="protein sequence ID" value="BAG64821.1"/>
    <property type="molecule type" value="mRNA"/>
</dbReference>
<dbReference type="EMBL" id="AK316510">
    <property type="protein sequence ID" value="BAH14881.1"/>
    <property type="molecule type" value="mRNA"/>
</dbReference>
<dbReference type="EMBL" id="AC099756">
    <property type="status" value="NOT_ANNOTATED_CDS"/>
    <property type="molecule type" value="Genomic_DNA"/>
</dbReference>
<dbReference type="EMBL" id="BC106877">
    <property type="protein sequence ID" value="AAI06878.1"/>
    <property type="molecule type" value="mRNA"/>
</dbReference>
<dbReference type="CCDS" id="CCDS44292.1">
    <molecule id="Q3KP66-3"/>
</dbReference>
<dbReference type="RefSeq" id="NP_001136041.1">
    <molecule id="Q3KP66-3"/>
    <property type="nucleotide sequence ID" value="NM_001142569.3"/>
</dbReference>
<dbReference type="RefSeq" id="NP_060735.4">
    <molecule id="Q3KP66-1"/>
    <property type="nucleotide sequence ID" value="NM_018265.4"/>
</dbReference>
<dbReference type="RefSeq" id="XP_011508056.1">
    <property type="nucleotide sequence ID" value="XM_011509754.2"/>
</dbReference>
<dbReference type="RefSeq" id="XP_011508057.1">
    <property type="nucleotide sequence ID" value="XM_011509755.1"/>
</dbReference>
<dbReference type="SMR" id="Q3KP66"/>
<dbReference type="BioGRID" id="120883">
    <property type="interactions" value="74"/>
</dbReference>
<dbReference type="FunCoup" id="Q3KP66">
    <property type="interactions" value="2036"/>
</dbReference>
<dbReference type="IntAct" id="Q3KP66">
    <property type="interactions" value="63"/>
</dbReference>
<dbReference type="MINT" id="Q3KP66"/>
<dbReference type="STRING" id="9606.ENSP00000392105"/>
<dbReference type="GlyGen" id="Q3KP66">
    <property type="glycosylation" value="2 sites, 1 O-linked glycan (1 site)"/>
</dbReference>
<dbReference type="iPTMnet" id="Q3KP66"/>
<dbReference type="PhosphoSitePlus" id="Q3KP66"/>
<dbReference type="BioMuta" id="INAVA"/>
<dbReference type="DMDM" id="317373328"/>
<dbReference type="jPOST" id="Q3KP66"/>
<dbReference type="MassIVE" id="Q3KP66"/>
<dbReference type="PaxDb" id="9606-ENSP00000392105"/>
<dbReference type="PeptideAtlas" id="Q3KP66"/>
<dbReference type="ProteomicsDB" id="20202"/>
<dbReference type="ProteomicsDB" id="61715">
    <molecule id="Q3KP66-1"/>
</dbReference>
<dbReference type="Antibodypedia" id="34491">
    <property type="antibodies" value="124 antibodies from 19 providers"/>
</dbReference>
<dbReference type="DNASU" id="55765"/>
<dbReference type="Ensembl" id="ENST00000413687.3">
    <molecule id="Q3KP66-3"/>
    <property type="protein sequence ID" value="ENSP00000392105.2"/>
    <property type="gene ID" value="ENSG00000163362.11"/>
</dbReference>
<dbReference type="GeneID" id="55765"/>
<dbReference type="KEGG" id="hsa:55765"/>
<dbReference type="MANE-Select" id="ENST00000413687.3">
    <molecule id="Q3KP66-3"/>
    <property type="protein sequence ID" value="ENSP00000392105.2"/>
    <property type="RefSeq nucleotide sequence ID" value="NM_001142569.3"/>
    <property type="RefSeq protein sequence ID" value="NP_001136041.1"/>
</dbReference>
<dbReference type="UCSC" id="uc010ppm.3">
    <molecule id="Q3KP66-1"/>
    <property type="organism name" value="human"/>
</dbReference>
<dbReference type="AGR" id="HGNC:25599"/>
<dbReference type="CTD" id="55765"/>
<dbReference type="DisGeNET" id="55765"/>
<dbReference type="GeneCards" id="INAVA"/>
<dbReference type="HGNC" id="HGNC:25599">
    <property type="gene designation" value="INAVA"/>
</dbReference>
<dbReference type="HPA" id="ENSG00000163362">
    <property type="expression patterns" value="Tissue enhanced (esophagus, intestine, skin)"/>
</dbReference>
<dbReference type="MalaCards" id="INAVA"/>
<dbReference type="MIM" id="618051">
    <property type="type" value="gene"/>
</dbReference>
<dbReference type="MIM" id="618077">
    <property type="type" value="phenotype"/>
</dbReference>
<dbReference type="neXtProt" id="NX_Q3KP66"/>
<dbReference type="OpenTargets" id="ENSG00000163362"/>
<dbReference type="PharmGKB" id="PA142672490"/>
<dbReference type="VEuPathDB" id="HostDB:ENSG00000163362"/>
<dbReference type="eggNOG" id="KOG3529">
    <property type="taxonomic scope" value="Eukaryota"/>
</dbReference>
<dbReference type="GeneTree" id="ENSGT00940000154102"/>
<dbReference type="HOGENOM" id="CLU_035581_0_0_1"/>
<dbReference type="InParanoid" id="Q3KP66"/>
<dbReference type="OMA" id="YVMVAES"/>
<dbReference type="OrthoDB" id="10063592at2759"/>
<dbReference type="PAN-GO" id="Q3KP66">
    <property type="GO annotations" value="2 GO annotations based on evolutionary models"/>
</dbReference>
<dbReference type="PhylomeDB" id="Q3KP66"/>
<dbReference type="TreeFam" id="TF328984"/>
<dbReference type="PathwayCommons" id="Q3KP66"/>
<dbReference type="SignaLink" id="Q3KP66"/>
<dbReference type="BioGRID-ORCS" id="55765">
    <property type="hits" value="19 hits in 1114 CRISPR screens"/>
</dbReference>
<dbReference type="ChiTaRS" id="C1orf106">
    <property type="organism name" value="human"/>
</dbReference>
<dbReference type="GenomeRNAi" id="55765"/>
<dbReference type="Pharos" id="Q3KP66">
    <property type="development level" value="Tbio"/>
</dbReference>
<dbReference type="PRO" id="PR:Q3KP66"/>
<dbReference type="Proteomes" id="UP000005640">
    <property type="component" value="Chromosome 1"/>
</dbReference>
<dbReference type="RNAct" id="Q3KP66">
    <property type="molecule type" value="protein"/>
</dbReference>
<dbReference type="Bgee" id="ENSG00000163362">
    <property type="expression patterns" value="Expressed in ileal mucosa and 154 other cell types or tissues"/>
</dbReference>
<dbReference type="ExpressionAtlas" id="Q3KP66">
    <property type="expression patterns" value="baseline and differential"/>
</dbReference>
<dbReference type="GO" id="GO:0005737">
    <property type="term" value="C:cytoplasm"/>
    <property type="evidence" value="ECO:0000315"/>
    <property type="project" value="UniProtKB"/>
</dbReference>
<dbReference type="GO" id="GO:0016604">
    <property type="term" value="C:nuclear body"/>
    <property type="evidence" value="ECO:0000314"/>
    <property type="project" value="HPA"/>
</dbReference>
<dbReference type="GO" id="GO:0005654">
    <property type="term" value="C:nucleoplasm"/>
    <property type="evidence" value="ECO:0000314"/>
    <property type="project" value="HPA"/>
</dbReference>
<dbReference type="GO" id="GO:0005634">
    <property type="term" value="C:nucleus"/>
    <property type="evidence" value="ECO:0000315"/>
    <property type="project" value="UniProtKB"/>
</dbReference>
<dbReference type="GO" id="GO:0034334">
    <property type="term" value="P:adherens junction maintenance"/>
    <property type="evidence" value="ECO:0000315"/>
    <property type="project" value="UniProtKB"/>
</dbReference>
<dbReference type="GO" id="GO:0045087">
    <property type="term" value="P:innate immune response"/>
    <property type="evidence" value="ECO:0000315"/>
    <property type="project" value="UniProtKB"/>
</dbReference>
<dbReference type="GO" id="GO:0060729">
    <property type="term" value="P:intestinal epithelial structure maintenance"/>
    <property type="evidence" value="ECO:0000250"/>
    <property type="project" value="UniProtKB"/>
</dbReference>
<dbReference type="GO" id="GO:0070431">
    <property type="term" value="P:nucleotide-binding oligomerization domain containing 2 signaling pathway"/>
    <property type="evidence" value="ECO:0000315"/>
    <property type="project" value="UniProtKB"/>
</dbReference>
<dbReference type="GO" id="GO:0002221">
    <property type="term" value="P:pattern recognition receptor signaling pathway"/>
    <property type="evidence" value="ECO:0000315"/>
    <property type="project" value="UniProtKB"/>
</dbReference>
<dbReference type="GO" id="GO:0043123">
    <property type="term" value="P:positive regulation of canonical NF-kappaB signal transduction"/>
    <property type="evidence" value="ECO:0000315"/>
    <property type="project" value="UniProtKB"/>
</dbReference>
<dbReference type="GO" id="GO:0002720">
    <property type="term" value="P:positive regulation of cytokine production involved in immune response"/>
    <property type="evidence" value="ECO:0000315"/>
    <property type="project" value="UniProtKB"/>
</dbReference>
<dbReference type="GO" id="GO:0032731">
    <property type="term" value="P:positive regulation of interleukin-1 beta production"/>
    <property type="evidence" value="ECO:0000315"/>
    <property type="project" value="UniProtKB"/>
</dbReference>
<dbReference type="GO" id="GO:0032733">
    <property type="term" value="P:positive regulation of interleukin-10 production"/>
    <property type="evidence" value="ECO:0000315"/>
    <property type="project" value="UniProtKB"/>
</dbReference>
<dbReference type="GO" id="GO:0032755">
    <property type="term" value="P:positive regulation of interleukin-6 production"/>
    <property type="evidence" value="ECO:0000315"/>
    <property type="project" value="UniProtKB"/>
</dbReference>
<dbReference type="GO" id="GO:0043410">
    <property type="term" value="P:positive regulation of MAPK cascade"/>
    <property type="evidence" value="ECO:0000315"/>
    <property type="project" value="GO_Central"/>
</dbReference>
<dbReference type="GO" id="GO:0031398">
    <property type="term" value="P:positive regulation of protein ubiquitination"/>
    <property type="evidence" value="ECO:0000315"/>
    <property type="project" value="UniProtKB"/>
</dbReference>
<dbReference type="GO" id="GO:0032874">
    <property type="term" value="P:positive regulation of stress-activated MAPK cascade"/>
    <property type="evidence" value="ECO:0000315"/>
    <property type="project" value="UniProtKB"/>
</dbReference>
<dbReference type="GO" id="GO:1903409">
    <property type="term" value="P:reactive oxygen species biosynthetic process"/>
    <property type="evidence" value="ECO:0000315"/>
    <property type="project" value="UniProtKB"/>
</dbReference>
<dbReference type="GO" id="GO:0032495">
    <property type="term" value="P:response to muramyl dipeptide"/>
    <property type="evidence" value="ECO:0000315"/>
    <property type="project" value="UniProtKB"/>
</dbReference>
<dbReference type="GO" id="GO:0032494">
    <property type="term" value="P:response to peptidoglycan"/>
    <property type="evidence" value="ECO:0000315"/>
    <property type="project" value="UniProtKB"/>
</dbReference>
<dbReference type="InterPro" id="IPR043447">
    <property type="entry name" value="CCDC120/INAVA"/>
</dbReference>
<dbReference type="InterPro" id="IPR021774">
    <property type="entry name" value="CUPID"/>
</dbReference>
<dbReference type="PANTHER" id="PTHR16093">
    <property type="entry name" value="COILED-COIL DOMAIN-CONTAINING PROTEIN 120 FAMILY MEMBER"/>
    <property type="match status" value="1"/>
</dbReference>
<dbReference type="PANTHER" id="PTHR16093:SF4">
    <property type="entry name" value="INNATE IMMUNITY ACTIVATOR PROTEIN"/>
    <property type="match status" value="1"/>
</dbReference>
<dbReference type="Pfam" id="PF11819">
    <property type="entry name" value="CUPID"/>
    <property type="match status" value="1"/>
</dbReference>
<reference key="1">
    <citation type="journal article" date="2004" name="Nat. Genet.">
        <title>Complete sequencing and characterization of 21,243 full-length human cDNAs.</title>
        <authorList>
            <person name="Ota T."/>
            <person name="Suzuki Y."/>
            <person name="Nishikawa T."/>
            <person name="Otsuki T."/>
            <person name="Sugiyama T."/>
            <person name="Irie R."/>
            <person name="Wakamatsu A."/>
            <person name="Hayashi K."/>
            <person name="Sato H."/>
            <person name="Nagai K."/>
            <person name="Kimura K."/>
            <person name="Makita H."/>
            <person name="Sekine M."/>
            <person name="Obayashi M."/>
            <person name="Nishi T."/>
            <person name="Shibahara T."/>
            <person name="Tanaka T."/>
            <person name="Ishii S."/>
            <person name="Yamamoto J."/>
            <person name="Saito K."/>
            <person name="Kawai Y."/>
            <person name="Isono Y."/>
            <person name="Nakamura Y."/>
            <person name="Nagahari K."/>
            <person name="Murakami K."/>
            <person name="Yasuda T."/>
            <person name="Iwayanagi T."/>
            <person name="Wagatsuma M."/>
            <person name="Shiratori A."/>
            <person name="Sudo H."/>
            <person name="Hosoiri T."/>
            <person name="Kaku Y."/>
            <person name="Kodaira H."/>
            <person name="Kondo H."/>
            <person name="Sugawara M."/>
            <person name="Takahashi M."/>
            <person name="Kanda K."/>
            <person name="Yokoi T."/>
            <person name="Furuya T."/>
            <person name="Kikkawa E."/>
            <person name="Omura Y."/>
            <person name="Abe K."/>
            <person name="Kamihara K."/>
            <person name="Katsuta N."/>
            <person name="Sato K."/>
            <person name="Tanikawa M."/>
            <person name="Yamazaki M."/>
            <person name="Ninomiya K."/>
            <person name="Ishibashi T."/>
            <person name="Yamashita H."/>
            <person name="Murakawa K."/>
            <person name="Fujimori K."/>
            <person name="Tanai H."/>
            <person name="Kimata M."/>
            <person name="Watanabe M."/>
            <person name="Hiraoka S."/>
            <person name="Chiba Y."/>
            <person name="Ishida S."/>
            <person name="Ono Y."/>
            <person name="Takiguchi S."/>
            <person name="Watanabe S."/>
            <person name="Yosida M."/>
            <person name="Hotuta T."/>
            <person name="Kusano J."/>
            <person name="Kanehori K."/>
            <person name="Takahashi-Fujii A."/>
            <person name="Hara H."/>
            <person name="Tanase T.-O."/>
            <person name="Nomura Y."/>
            <person name="Togiya S."/>
            <person name="Komai F."/>
            <person name="Hara R."/>
            <person name="Takeuchi K."/>
            <person name="Arita M."/>
            <person name="Imose N."/>
            <person name="Musashino K."/>
            <person name="Yuuki H."/>
            <person name="Oshima A."/>
            <person name="Sasaki N."/>
            <person name="Aotsuka S."/>
            <person name="Yoshikawa Y."/>
            <person name="Matsunawa H."/>
            <person name="Ichihara T."/>
            <person name="Shiohata N."/>
            <person name="Sano S."/>
            <person name="Moriya S."/>
            <person name="Momiyama H."/>
            <person name="Satoh N."/>
            <person name="Takami S."/>
            <person name="Terashima Y."/>
            <person name="Suzuki O."/>
            <person name="Nakagawa S."/>
            <person name="Senoh A."/>
            <person name="Mizoguchi H."/>
            <person name="Goto Y."/>
            <person name="Shimizu F."/>
            <person name="Wakebe H."/>
            <person name="Hishigaki H."/>
            <person name="Watanabe T."/>
            <person name="Sugiyama A."/>
            <person name="Takemoto M."/>
            <person name="Kawakami B."/>
            <person name="Yamazaki M."/>
            <person name="Watanabe K."/>
            <person name="Kumagai A."/>
            <person name="Itakura S."/>
            <person name="Fukuzumi Y."/>
            <person name="Fujimori Y."/>
            <person name="Komiyama M."/>
            <person name="Tashiro H."/>
            <person name="Tanigami A."/>
            <person name="Fujiwara T."/>
            <person name="Ono T."/>
            <person name="Yamada K."/>
            <person name="Fujii Y."/>
            <person name="Ozaki K."/>
            <person name="Hirao M."/>
            <person name="Ohmori Y."/>
            <person name="Kawabata A."/>
            <person name="Hikiji T."/>
            <person name="Kobatake N."/>
            <person name="Inagaki H."/>
            <person name="Ikema Y."/>
            <person name="Okamoto S."/>
            <person name="Okitani R."/>
            <person name="Kawakami T."/>
            <person name="Noguchi S."/>
            <person name="Itoh T."/>
            <person name="Shigeta K."/>
            <person name="Senba T."/>
            <person name="Matsumura K."/>
            <person name="Nakajima Y."/>
            <person name="Mizuno T."/>
            <person name="Morinaga M."/>
            <person name="Sasaki M."/>
            <person name="Togashi T."/>
            <person name="Oyama M."/>
            <person name="Hata H."/>
            <person name="Watanabe M."/>
            <person name="Komatsu T."/>
            <person name="Mizushima-Sugano J."/>
            <person name="Satoh T."/>
            <person name="Shirai Y."/>
            <person name="Takahashi Y."/>
            <person name="Nakagawa K."/>
            <person name="Okumura K."/>
            <person name="Nagase T."/>
            <person name="Nomura N."/>
            <person name="Kikuchi H."/>
            <person name="Masuho Y."/>
            <person name="Yamashita R."/>
            <person name="Nakai K."/>
            <person name="Yada T."/>
            <person name="Nakamura Y."/>
            <person name="Ohara O."/>
            <person name="Isogai T."/>
            <person name="Sugano S."/>
        </authorList>
    </citation>
    <scope>NUCLEOTIDE SEQUENCE [LARGE SCALE MRNA] (ISOFORMS 1 AND 2)</scope>
    <scope>VARIANT CYS-538</scope>
    <source>
        <tissue>Trachea</tissue>
    </source>
</reference>
<reference key="2">
    <citation type="journal article" date="2006" name="Nature">
        <title>The DNA sequence and biological annotation of human chromosome 1.</title>
        <authorList>
            <person name="Gregory S.G."/>
            <person name="Barlow K.F."/>
            <person name="McLay K.E."/>
            <person name="Kaul R."/>
            <person name="Swarbreck D."/>
            <person name="Dunham A."/>
            <person name="Scott C.E."/>
            <person name="Howe K.L."/>
            <person name="Woodfine K."/>
            <person name="Spencer C.C.A."/>
            <person name="Jones M.C."/>
            <person name="Gillson C."/>
            <person name="Searle S."/>
            <person name="Zhou Y."/>
            <person name="Kokocinski F."/>
            <person name="McDonald L."/>
            <person name="Evans R."/>
            <person name="Phillips K."/>
            <person name="Atkinson A."/>
            <person name="Cooper R."/>
            <person name="Jones C."/>
            <person name="Hall R.E."/>
            <person name="Andrews T.D."/>
            <person name="Lloyd C."/>
            <person name="Ainscough R."/>
            <person name="Almeida J.P."/>
            <person name="Ambrose K.D."/>
            <person name="Anderson F."/>
            <person name="Andrew R.W."/>
            <person name="Ashwell R.I.S."/>
            <person name="Aubin K."/>
            <person name="Babbage A.K."/>
            <person name="Bagguley C.L."/>
            <person name="Bailey J."/>
            <person name="Beasley H."/>
            <person name="Bethel G."/>
            <person name="Bird C.P."/>
            <person name="Bray-Allen S."/>
            <person name="Brown J.Y."/>
            <person name="Brown A.J."/>
            <person name="Buckley D."/>
            <person name="Burton J."/>
            <person name="Bye J."/>
            <person name="Carder C."/>
            <person name="Chapman J.C."/>
            <person name="Clark S.Y."/>
            <person name="Clarke G."/>
            <person name="Clee C."/>
            <person name="Cobley V."/>
            <person name="Collier R.E."/>
            <person name="Corby N."/>
            <person name="Coville G.J."/>
            <person name="Davies J."/>
            <person name="Deadman R."/>
            <person name="Dunn M."/>
            <person name="Earthrowl M."/>
            <person name="Ellington A.G."/>
            <person name="Errington H."/>
            <person name="Frankish A."/>
            <person name="Frankland J."/>
            <person name="French L."/>
            <person name="Garner P."/>
            <person name="Garnett J."/>
            <person name="Gay L."/>
            <person name="Ghori M.R.J."/>
            <person name="Gibson R."/>
            <person name="Gilby L.M."/>
            <person name="Gillett W."/>
            <person name="Glithero R.J."/>
            <person name="Grafham D.V."/>
            <person name="Griffiths C."/>
            <person name="Griffiths-Jones S."/>
            <person name="Grocock R."/>
            <person name="Hammond S."/>
            <person name="Harrison E.S.I."/>
            <person name="Hart E."/>
            <person name="Haugen E."/>
            <person name="Heath P.D."/>
            <person name="Holmes S."/>
            <person name="Holt K."/>
            <person name="Howden P.J."/>
            <person name="Hunt A.R."/>
            <person name="Hunt S.E."/>
            <person name="Hunter G."/>
            <person name="Isherwood J."/>
            <person name="James R."/>
            <person name="Johnson C."/>
            <person name="Johnson D."/>
            <person name="Joy A."/>
            <person name="Kay M."/>
            <person name="Kershaw J.K."/>
            <person name="Kibukawa M."/>
            <person name="Kimberley A.M."/>
            <person name="King A."/>
            <person name="Knights A.J."/>
            <person name="Lad H."/>
            <person name="Laird G."/>
            <person name="Lawlor S."/>
            <person name="Leongamornlert D.A."/>
            <person name="Lloyd D.M."/>
            <person name="Loveland J."/>
            <person name="Lovell J."/>
            <person name="Lush M.J."/>
            <person name="Lyne R."/>
            <person name="Martin S."/>
            <person name="Mashreghi-Mohammadi M."/>
            <person name="Matthews L."/>
            <person name="Matthews N.S.W."/>
            <person name="McLaren S."/>
            <person name="Milne S."/>
            <person name="Mistry S."/>
            <person name="Moore M.J.F."/>
            <person name="Nickerson T."/>
            <person name="O'Dell C.N."/>
            <person name="Oliver K."/>
            <person name="Palmeiri A."/>
            <person name="Palmer S.A."/>
            <person name="Parker A."/>
            <person name="Patel D."/>
            <person name="Pearce A.V."/>
            <person name="Peck A.I."/>
            <person name="Pelan S."/>
            <person name="Phelps K."/>
            <person name="Phillimore B.J."/>
            <person name="Plumb R."/>
            <person name="Rajan J."/>
            <person name="Raymond C."/>
            <person name="Rouse G."/>
            <person name="Saenphimmachak C."/>
            <person name="Sehra H.K."/>
            <person name="Sheridan E."/>
            <person name="Shownkeen R."/>
            <person name="Sims S."/>
            <person name="Skuce C.D."/>
            <person name="Smith M."/>
            <person name="Steward C."/>
            <person name="Subramanian S."/>
            <person name="Sycamore N."/>
            <person name="Tracey A."/>
            <person name="Tromans A."/>
            <person name="Van Helmond Z."/>
            <person name="Wall M."/>
            <person name="Wallis J.M."/>
            <person name="White S."/>
            <person name="Whitehead S.L."/>
            <person name="Wilkinson J.E."/>
            <person name="Willey D.L."/>
            <person name="Williams H."/>
            <person name="Wilming L."/>
            <person name="Wray P.W."/>
            <person name="Wu Z."/>
            <person name="Coulson A."/>
            <person name="Vaudin M."/>
            <person name="Sulston J.E."/>
            <person name="Durbin R.M."/>
            <person name="Hubbard T."/>
            <person name="Wooster R."/>
            <person name="Dunham I."/>
            <person name="Carter N.P."/>
            <person name="McVean G."/>
            <person name="Ross M.T."/>
            <person name="Harrow J."/>
            <person name="Olson M.V."/>
            <person name="Beck S."/>
            <person name="Rogers J."/>
            <person name="Bentley D.R."/>
        </authorList>
    </citation>
    <scope>NUCLEOTIDE SEQUENCE [LARGE SCALE GENOMIC DNA]</scope>
</reference>
<reference key="3">
    <citation type="journal article" date="2004" name="Genome Res.">
        <title>The status, quality, and expansion of the NIH full-length cDNA project: the Mammalian Gene Collection (MGC).</title>
        <authorList>
            <consortium name="The MGC Project Team"/>
        </authorList>
    </citation>
    <scope>NUCLEOTIDE SEQUENCE [LARGE SCALE MRNA] (ISOFORM 1)</scope>
    <scope>VARIANT CYS-538</scope>
</reference>
<reference key="4">
    <citation type="journal article" date="2011" name="Nat. Genet.">
        <title>Deep resequencing of GWAS loci identifies independent rare variants associated with inflammatory bowel disease.</title>
        <authorList>
            <consortium name="National Institute of Diabetes and Digestive Kidney Diseases Inflammatory Bowel Disease Genetics Consortium (NIDDK IBDGC)"/>
            <consortium name="United Kingdom Inflammatory Bowel Disease Genetics Consortium"/>
            <person name="Rivas M.A."/>
            <person name="Beaudoin M."/>
            <person name="Gardet A."/>
            <person name="Stevens C."/>
            <person name="Sharma Y."/>
            <person name="Zhang C.K."/>
            <person name="Boucher G."/>
            <person name="Ripke S."/>
            <person name="Ellinghaus D."/>
            <person name="Burtt N."/>
            <person name="Fennell T."/>
            <person name="Kirby A."/>
            <person name="Latiano A."/>
            <person name="Goyette P."/>
            <person name="Green T."/>
            <person name="Halfvarson J."/>
            <person name="Haritunians T."/>
            <person name="Korn J.M."/>
            <person name="Kuruvilla F."/>
            <person name="Lagace C."/>
            <person name="Neale B."/>
            <person name="Lo K.S."/>
            <person name="Schumm P."/>
            <person name="Toerkvist L."/>
            <person name="Dubinsky M.C."/>
            <person name="Brant S.R."/>
            <person name="Silverberg M.S."/>
            <person name="Duerr R.H."/>
            <person name="Altshuler D."/>
            <person name="Gabriel S."/>
            <person name="Lettre G."/>
            <person name="Franke A."/>
            <person name="D'Amato M."/>
            <person name="McGovern D.P."/>
            <person name="Cho J.H."/>
            <person name="Rioux J.D."/>
            <person name="Xavier R.J."/>
            <person name="Daly M.J."/>
        </authorList>
    </citation>
    <scope>INVOLVEMENT IN IBD29</scope>
    <scope>VARIANT IBD29 PHE-333</scope>
</reference>
<reference key="5">
    <citation type="journal article" date="2017" name="J. Clin. Invest.">
        <title>An inflammatory bowel disease-risk variant in INAVA decreases pattern recognition receptor-induced outcomes.</title>
        <authorList>
            <person name="Yan J."/>
            <person name="Hedl M."/>
            <person name="Abraham C."/>
        </authorList>
    </citation>
    <scope>FUNCTION</scope>
    <scope>INVOLVEMENT IN IBD29</scope>
    <scope>TISSUE SPECIFICITY</scope>
    <scope>INDUCTION BY MDP AND MIR-24</scope>
    <scope>SUBCELLULAR LOCATION</scope>
    <scope>INTERACTION WITH IRAK1; NOD2; RIPK2 AND YWHAQ</scope>
    <scope>MUTAGENESIS OF 164-PRO--ILE-170; SER-246; 335-LYS--LYS-338; SER-340; 423-ARG--PRO-426 AND SER-616</scope>
</reference>
<reference key="6">
    <citation type="journal article" date="2018" name="Science">
        <title>C1orf106 is a colitis risk gene that regulates stability of epithelial adherens junctions.</title>
        <authorList>
            <person name="Mohanan V."/>
            <person name="Nakata T."/>
            <person name="Desch A.N."/>
            <person name="Levesque C."/>
            <person name="Boroughs A."/>
            <person name="Guzman G."/>
            <person name="Cao Z."/>
            <person name="Creasey E."/>
            <person name="Yao J."/>
            <person name="Boucher G."/>
            <person name="Charron G."/>
            <person name="Bhan A.K."/>
            <person name="Schenone M."/>
            <person name="Carr S.A."/>
            <person name="Reinecker H.C."/>
            <person name="Daly M.J."/>
            <person name="Rioux J.D."/>
            <person name="Lassen K.G."/>
            <person name="Xavier R.J."/>
        </authorList>
    </citation>
    <scope>FUNCTION</scope>
    <scope>INVOLVEMENT IN IBD29</scope>
    <scope>VARIANT IBD29 PHE-333</scope>
    <scope>CHARACTERIZATION OF VARIANT IBD29 PHE-333</scope>
    <scope>TISSUE SPECIFICITY</scope>
    <scope>INTERACTION WITH BTRC; CYTH1; CYTH2 AND FBXW11</scope>
</reference>
<evidence type="ECO:0000255" key="1"/>
<evidence type="ECO:0000256" key="2">
    <source>
        <dbReference type="SAM" id="MobiDB-lite"/>
    </source>
</evidence>
<evidence type="ECO:0000269" key="3">
    <source>
    </source>
</evidence>
<evidence type="ECO:0000269" key="4">
    <source>
    </source>
</evidence>
<evidence type="ECO:0000269" key="5">
    <source>
    </source>
</evidence>
<evidence type="ECO:0000269" key="6">
    <source>
    </source>
</evidence>
<evidence type="ECO:0000269" key="7">
    <source>
    </source>
</evidence>
<evidence type="ECO:0000303" key="8">
    <source>
    </source>
</evidence>
<evidence type="ECO:0000305" key="9"/>
<evidence type="ECO:0000312" key="10">
    <source>
        <dbReference type="HGNC" id="HGNC:25599"/>
    </source>
</evidence>
<keyword id="KW-0025">Alternative splicing</keyword>
<keyword id="KW-0175">Coiled coil</keyword>
<keyword id="KW-0963">Cytoplasm</keyword>
<keyword id="KW-0225">Disease variant</keyword>
<keyword id="KW-0391">Immunity</keyword>
<keyword id="KW-0399">Innate immunity</keyword>
<keyword id="KW-0539">Nucleus</keyword>
<keyword id="KW-1267">Proteomics identification</keyword>
<keyword id="KW-1185">Reference proteome</keyword>
<sequence>MLQMPKLNEIPPGRAGRREARGEGRWPGQTGPEAARLEWRAQGQAGGARAPWDSWGSSRLPTQPGPGWSRCPPSLLCALSFQKSTMESKDEVSDTDSGIILQSGPDSPVSPMKELTHAVHKQQRALEARLEACLEELRRLCLREAELTGTLPAEYPLKPGEKAPKVRRRIGAAYKLDDWALHREDPLSSLERQLALQLQITEAARRLCLEENLSRQARRQRKHSMLQEEKKLQELQRCLVERRRNSEPPPAAALPLGRELSASDDSSLSDGLLLEEEESQVPKPPPESPAPPSRPLPPQTLEGLQPTGPEAGSPERAPVQNSPWKETSLDHPYEKPRKSSEPWSESSSPATTPQDGPSASSLWLLEPASYHVVPIRGVPGQWQGRTSAPATPEIQGRRGQSQSLRVDSFRAGPEGRGRSAFPRRRPTHYTVTVPDSCFPATKPPLPHAACHSCSEDSGSDVSSISHPTSPGSSSPDISFLQPLSPPKTHRHRGAWVPAGSRELVAHHPKLLLPPGYFPAGRYVVVAESPLPPGEWELRRAAPGPAYEEEGTPLRYQRLVPSRSRIVRTPSLKDSPAGRGLSKAAVSEELKWWHERARLRSTRPHSLDRQGAFRVRSLPLGREGFGRALGPRAQVPTVCVLRRSPDGAPVQVFVPEKGEIISQV</sequence>
<feature type="chain" id="PRO_0000251729" description="Innate immunity activator protein">
    <location>
        <begin position="1"/>
        <end position="663"/>
    </location>
</feature>
<feature type="region of interest" description="Disordered" evidence="2">
    <location>
        <begin position="1"/>
        <end position="68"/>
    </location>
</feature>
<feature type="region of interest" description="Disordered" evidence="2">
    <location>
        <begin position="242"/>
        <end position="362"/>
    </location>
</feature>
<feature type="region of interest" description="Disordered" evidence="2">
    <location>
        <begin position="378"/>
        <end position="425"/>
    </location>
</feature>
<feature type="region of interest" description="Disordered" evidence="2">
    <location>
        <begin position="444"/>
        <end position="493"/>
    </location>
</feature>
<feature type="coiled-coil region" evidence="1">
    <location>
        <begin position="118"/>
        <end position="147"/>
    </location>
</feature>
<feature type="short sequence motif" description="Nuclear localization signal (NLS) 1" evidence="6">
    <location>
        <begin position="164"/>
        <end position="170"/>
    </location>
</feature>
<feature type="short sequence motif" description="Nuclear localization signal (NLS) 2" evidence="6">
    <location>
        <begin position="332"/>
        <end position="338"/>
    </location>
</feature>
<feature type="short sequence motif" description="Nuclear localization signal (NLS) 3" evidence="6">
    <location>
        <begin position="422"/>
        <end position="428"/>
    </location>
</feature>
<feature type="compositionally biased region" description="Low complexity" evidence="2">
    <location>
        <begin position="40"/>
        <end position="50"/>
    </location>
</feature>
<feature type="compositionally biased region" description="Low complexity" evidence="2">
    <location>
        <begin position="259"/>
        <end position="272"/>
    </location>
</feature>
<feature type="compositionally biased region" description="Pro residues" evidence="2">
    <location>
        <begin position="282"/>
        <end position="298"/>
    </location>
</feature>
<feature type="compositionally biased region" description="Basic and acidic residues" evidence="2">
    <location>
        <begin position="327"/>
        <end position="340"/>
    </location>
</feature>
<feature type="compositionally biased region" description="Polar residues" evidence="2">
    <location>
        <begin position="350"/>
        <end position="361"/>
    </location>
</feature>
<feature type="compositionally biased region" description="Low complexity" evidence="2">
    <location>
        <begin position="455"/>
        <end position="475"/>
    </location>
</feature>
<feature type="splice variant" id="VSP_046048" description="In isoform 2." evidence="8">
    <location>
        <begin position="1"/>
        <end position="85"/>
    </location>
</feature>
<feature type="sequence variant" id="VAR_080249" description="In IBD29; decreases protein stability; dbSNP:rs41313912." evidence="5 7">
    <original>Y</original>
    <variation>F</variation>
    <location>
        <position position="333"/>
    </location>
</feature>
<feature type="sequence variant" id="VAR_030835" description="In dbSNP:rs296520." evidence="3 4">
    <original>R</original>
    <variation>C</variation>
    <location>
        <position position="538"/>
    </location>
</feature>
<feature type="mutagenesis site" description="No effect on nuclear translocation upon induction by MDP. Abolishes nuclear translocation upon induction by MDP and slightly decreases NOD2-induced AP-1 and NF-kappaB activation and IL6 secretion; when associated with 335-A--A-338 and 423-A--A-426." evidence="6">
    <original>PKVRRRI</original>
    <variation>AAAAAAA</variation>
    <location>
        <begin position="164"/>
        <end position="170"/>
    </location>
</feature>
<feature type="mutagenesis site" description="Decreases interaction with YWHAQ, cellular signaling pathway activation and cytokine secretion." evidence="6">
    <original>S</original>
    <variation>A</variation>
    <location>
        <position position="246"/>
    </location>
</feature>
<feature type="mutagenesis site" description="No effect on nuclear translocation upon induction by MDP. Abolishes nuclear translocation upon induction by MDP and slightly decreases NOD2-induced AP-1 and NF-kappaB activation and IL6 secretion; when associated with 164-A--A-170 and 423-A--A-426." evidence="6">
    <original>KPRK</original>
    <variation>AAAA</variation>
    <location>
        <begin position="335"/>
        <end position="338"/>
    </location>
</feature>
<feature type="mutagenesis site" description="Decreases interaction with YWHAQ, cellular signaling pathway activation and cytokine secretion." evidence="6">
    <original>S</original>
    <variation>A</variation>
    <location>
        <position position="340"/>
    </location>
</feature>
<feature type="mutagenesis site" description="No effect on nuclear translocation upon induction by MDP. Abolishes nuclear translocation upon induction by MDP and slightly decreases NOD2-induced AP-1 and NF-kappaB activation and IL6 secretion; when associated with 164-A--A-170 and 335-A--A-338." evidence="6">
    <original>RRRP</original>
    <variation>AAAA</variation>
    <location>
        <begin position="423"/>
        <end position="426"/>
    </location>
</feature>
<feature type="mutagenesis site" description="Decreases interaction with YWHAQ, cellular signaling pathway activation and cytokine secretion." evidence="6">
    <original>S</original>
    <variation>A</variation>
    <location>
        <position position="616"/>
    </location>
</feature>
<feature type="sequence conflict" description="In Ref. 1; BAA91892." evidence="9" ref="1">
    <original>R</original>
    <variation>W</variation>
    <location>
        <position position="641"/>
    </location>
</feature>
<proteinExistence type="evidence at protein level"/>
<protein>
    <recommendedName>
        <fullName evidence="10">Innate immunity activator protein</fullName>
    </recommendedName>
</protein>
<gene>
    <name evidence="10" type="primary">INAVA</name>
    <name type="synonym">C1orf106</name>
</gene>
<organism>
    <name type="scientific">Homo sapiens</name>
    <name type="common">Human</name>
    <dbReference type="NCBI Taxonomy" id="9606"/>
    <lineage>
        <taxon>Eukaryota</taxon>
        <taxon>Metazoa</taxon>
        <taxon>Chordata</taxon>
        <taxon>Craniata</taxon>
        <taxon>Vertebrata</taxon>
        <taxon>Euteleostomi</taxon>
        <taxon>Mammalia</taxon>
        <taxon>Eutheria</taxon>
        <taxon>Euarchontoglires</taxon>
        <taxon>Primates</taxon>
        <taxon>Haplorrhini</taxon>
        <taxon>Catarrhini</taxon>
        <taxon>Hominidae</taxon>
        <taxon>Homo</taxon>
    </lineage>
</organism>
<accession>Q3KP66</accession>
<accession>B4E1K9</accession>
<accession>E9PFY0</accession>
<accession>Q9NV65</accession>
<accession>Q9NVI0</accession>
<name>INAVA_HUMAN</name>